<reference key="1">
    <citation type="submission" date="2006-05" db="EMBL/GenBank/DDBJ databases">
        <authorList>
            <consortium name="Genoscope"/>
        </authorList>
    </citation>
    <scope>NUCLEOTIDE SEQUENCE [LARGE SCALE GENOMIC DNA]</scope>
    <source>
        <strain>WH7803</strain>
    </source>
</reference>
<comment type="function">
    <text evidence="1">Specifically methylates guanosine-37 in various tRNAs.</text>
</comment>
<comment type="catalytic activity">
    <reaction evidence="1">
        <text>guanosine(37) in tRNA + S-adenosyl-L-methionine = N(1)-methylguanosine(37) in tRNA + S-adenosyl-L-homocysteine + H(+)</text>
        <dbReference type="Rhea" id="RHEA:36899"/>
        <dbReference type="Rhea" id="RHEA-COMP:10145"/>
        <dbReference type="Rhea" id="RHEA-COMP:10147"/>
        <dbReference type="ChEBI" id="CHEBI:15378"/>
        <dbReference type="ChEBI" id="CHEBI:57856"/>
        <dbReference type="ChEBI" id="CHEBI:59789"/>
        <dbReference type="ChEBI" id="CHEBI:73542"/>
        <dbReference type="ChEBI" id="CHEBI:74269"/>
        <dbReference type="EC" id="2.1.1.228"/>
    </reaction>
</comment>
<comment type="subunit">
    <text evidence="1">Homodimer.</text>
</comment>
<comment type="subcellular location">
    <subcellularLocation>
        <location evidence="1">Cytoplasm</location>
    </subcellularLocation>
</comment>
<comment type="similarity">
    <text evidence="1">Belongs to the RNA methyltransferase TrmD family.</text>
</comment>
<gene>
    <name evidence="1" type="primary">trmD</name>
    <name type="ordered locus">SynWH7803_1724</name>
</gene>
<accession>A5GMI5</accession>
<evidence type="ECO:0000255" key="1">
    <source>
        <dbReference type="HAMAP-Rule" id="MF_00605"/>
    </source>
</evidence>
<evidence type="ECO:0000256" key="2">
    <source>
        <dbReference type="SAM" id="MobiDB-lite"/>
    </source>
</evidence>
<protein>
    <recommendedName>
        <fullName evidence="1">tRNA (guanine-N(1)-)-methyltransferase</fullName>
        <ecNumber evidence="1">2.1.1.228</ecNumber>
    </recommendedName>
    <alternativeName>
        <fullName evidence="1">M1G-methyltransferase</fullName>
    </alternativeName>
    <alternativeName>
        <fullName evidence="1">tRNA [GM37] methyltransferase</fullName>
    </alternativeName>
</protein>
<dbReference type="EC" id="2.1.1.228" evidence="1"/>
<dbReference type="EMBL" id="CT971583">
    <property type="protein sequence ID" value="CAK24150.1"/>
    <property type="molecule type" value="Genomic_DNA"/>
</dbReference>
<dbReference type="SMR" id="A5GMI5"/>
<dbReference type="STRING" id="32051.SynWH7803_1724"/>
<dbReference type="KEGG" id="syx:SynWH7803_1724"/>
<dbReference type="eggNOG" id="COG0336">
    <property type="taxonomic scope" value="Bacteria"/>
</dbReference>
<dbReference type="HOGENOM" id="CLU_047363_0_1_3"/>
<dbReference type="Proteomes" id="UP000001566">
    <property type="component" value="Chromosome"/>
</dbReference>
<dbReference type="GO" id="GO:0005829">
    <property type="term" value="C:cytosol"/>
    <property type="evidence" value="ECO:0007669"/>
    <property type="project" value="TreeGrafter"/>
</dbReference>
<dbReference type="GO" id="GO:0052906">
    <property type="term" value="F:tRNA (guanine(37)-N1)-methyltransferase activity"/>
    <property type="evidence" value="ECO:0007669"/>
    <property type="project" value="UniProtKB-UniRule"/>
</dbReference>
<dbReference type="GO" id="GO:0002939">
    <property type="term" value="P:tRNA N1-guanine methylation"/>
    <property type="evidence" value="ECO:0007669"/>
    <property type="project" value="TreeGrafter"/>
</dbReference>
<dbReference type="CDD" id="cd18080">
    <property type="entry name" value="TrmD-like"/>
    <property type="match status" value="1"/>
</dbReference>
<dbReference type="FunFam" id="1.10.1270.20:FF:000001">
    <property type="entry name" value="tRNA (guanine-N(1)-)-methyltransferase"/>
    <property type="match status" value="1"/>
</dbReference>
<dbReference type="Gene3D" id="3.40.1280.10">
    <property type="match status" value="1"/>
</dbReference>
<dbReference type="Gene3D" id="1.10.1270.20">
    <property type="entry name" value="tRNA(m1g37)methyltransferase, domain 2"/>
    <property type="match status" value="1"/>
</dbReference>
<dbReference type="HAMAP" id="MF_00605">
    <property type="entry name" value="TrmD"/>
    <property type="match status" value="1"/>
</dbReference>
<dbReference type="InterPro" id="IPR029028">
    <property type="entry name" value="Alpha/beta_knot_MTases"/>
</dbReference>
<dbReference type="InterPro" id="IPR023148">
    <property type="entry name" value="tRNA_m1G_MeTrfase_C_sf"/>
</dbReference>
<dbReference type="InterPro" id="IPR002649">
    <property type="entry name" value="tRNA_m1G_MeTrfase_TrmD"/>
</dbReference>
<dbReference type="InterPro" id="IPR029026">
    <property type="entry name" value="tRNA_m1G_MTases_N"/>
</dbReference>
<dbReference type="InterPro" id="IPR016009">
    <property type="entry name" value="tRNA_MeTrfase_TRMD/TRM10"/>
</dbReference>
<dbReference type="NCBIfam" id="NF000648">
    <property type="entry name" value="PRK00026.1"/>
    <property type="match status" value="1"/>
</dbReference>
<dbReference type="NCBIfam" id="TIGR00088">
    <property type="entry name" value="trmD"/>
    <property type="match status" value="1"/>
</dbReference>
<dbReference type="PANTHER" id="PTHR46417">
    <property type="entry name" value="TRNA (GUANINE-N(1)-)-METHYLTRANSFERASE"/>
    <property type="match status" value="1"/>
</dbReference>
<dbReference type="PANTHER" id="PTHR46417:SF1">
    <property type="entry name" value="TRNA (GUANINE-N(1)-)-METHYLTRANSFERASE"/>
    <property type="match status" value="1"/>
</dbReference>
<dbReference type="Pfam" id="PF01746">
    <property type="entry name" value="tRNA_m1G_MT"/>
    <property type="match status" value="1"/>
</dbReference>
<dbReference type="PIRSF" id="PIRSF000386">
    <property type="entry name" value="tRNA_mtase"/>
    <property type="match status" value="1"/>
</dbReference>
<dbReference type="SUPFAM" id="SSF75217">
    <property type="entry name" value="alpha/beta knot"/>
    <property type="match status" value="1"/>
</dbReference>
<keyword id="KW-0963">Cytoplasm</keyword>
<keyword id="KW-0489">Methyltransferase</keyword>
<keyword id="KW-1185">Reference proteome</keyword>
<keyword id="KW-0949">S-adenosyl-L-methionine</keyword>
<keyword id="KW-0808">Transferase</keyword>
<keyword id="KW-0819">tRNA processing</keyword>
<organism>
    <name type="scientific">Synechococcus sp. (strain WH7803)</name>
    <dbReference type="NCBI Taxonomy" id="32051"/>
    <lineage>
        <taxon>Bacteria</taxon>
        <taxon>Bacillati</taxon>
        <taxon>Cyanobacteriota</taxon>
        <taxon>Cyanophyceae</taxon>
        <taxon>Synechococcales</taxon>
        <taxon>Synechococcaceae</taxon>
        <taxon>Synechococcus</taxon>
    </lineage>
</organism>
<proteinExistence type="inferred from homology"/>
<feature type="chain" id="PRO_1000006533" description="tRNA (guanine-N(1)-)-methyltransferase">
    <location>
        <begin position="1"/>
        <end position="242"/>
    </location>
</feature>
<feature type="region of interest" description="Disordered" evidence="2">
    <location>
        <begin position="210"/>
        <end position="242"/>
    </location>
</feature>
<feature type="compositionally biased region" description="Basic and acidic residues" evidence="2">
    <location>
        <begin position="210"/>
        <end position="224"/>
    </location>
</feature>
<feature type="binding site" evidence="1">
    <location>
        <position position="115"/>
    </location>
    <ligand>
        <name>S-adenosyl-L-methionine</name>
        <dbReference type="ChEBI" id="CHEBI:59789"/>
    </ligand>
</feature>
<feature type="binding site" evidence="1">
    <location>
        <begin position="134"/>
        <end position="139"/>
    </location>
    <ligand>
        <name>S-adenosyl-L-methionine</name>
        <dbReference type="ChEBI" id="CHEBI:59789"/>
    </ligand>
</feature>
<name>TRMD_SYNPW</name>
<sequence length="242" mass="26939">MAPYRLDVVTLAPQAFAPMGELGVIGRAFHAGRAELVLHNPRDHASDRYRKVDDEPYGGGAGMVLKPEPVFAAFDAIPVCGRRRVLLMTPQGHPLQQADLQRWATDHDQLVLLCGHYEGFDERIRTLADEEVSLGDFVLTGGELPAMTIINGVVRLLPGTVGSAESLVEESHSDGLLEHPHYTRPAEFRGMGVPEVLRSGDHGAIARWRQEQREQRTAARRPDLMQRWQQRFGADNDSEHRA</sequence>